<gene>
    <name evidence="12" type="primary">Vps4a</name>
</gene>
<comment type="function">
    <text evidence="4">Involved in late steps of the endosomal multivesicular bodies (MVB) pathway. Recognizes membrane-associated ESCRT-III assemblies and catalyzes their disassembly, possibly in combination with membrane fission. Redistributes the ESCRT-III components to the cytoplasm for further rounds of MVB sorting. MVBs contain intraluminal vesicles (ILVs) that are generated by invagination and scission from the limiting membrane of the endosome and mostly are delivered to lysosomes enabling degradation of membrane proteins, such as stimulated growth factor receptors, lysosomal enzymes and lipids. It is required for proper accomplishment of various processes including the regulation of endosome size, primary cilium organization, mitotic spindle organization and chromosome segregation, and nuclear envelope sealing and spindle disassembly during anaphase (By similarity). In conjunction with the ESCRT machinery also appears to function in topologically equivalent membrane fission events, such as the terminal stages of cytokinesis. Involved in cytokinesis: retained at the midbody by ZFYVE19/ANCHR and CHMP4C until abscission checkpoint signaling is terminated at late cytokinesis. It is then released following dephosphorylation of CHMP4C, leading to abscission. VPS4A/B are required for the exosomal release of SDCBP, CD63 and syndecan (By similarity). Critical for normal erythroblast cytokinesis and correct erythropoiesis (By similarity).</text>
</comment>
<comment type="catalytic activity">
    <reaction evidence="2">
        <text>ATP + H2O = ADP + phosphate + H(+)</text>
        <dbReference type="Rhea" id="RHEA:13065"/>
        <dbReference type="ChEBI" id="CHEBI:15377"/>
        <dbReference type="ChEBI" id="CHEBI:15378"/>
        <dbReference type="ChEBI" id="CHEBI:30616"/>
        <dbReference type="ChEBI" id="CHEBI:43474"/>
        <dbReference type="ChEBI" id="CHEBI:456216"/>
        <dbReference type="EC" id="3.6.4.6"/>
    </reaction>
</comment>
<comment type="subunit">
    <text evidence="1 4">Proposed to be monomeric or homodimeric in nucleotide-free form and to oligomerize upon binding to ATP to form two stacked hexameric or heptameric rings with a central pore through which ESCRT-III substrates are translocated in an ATP-dependent manner (By similarity). Interacts with CHMP1A, CHMP1B, CHMP2A, CHMP2B, CHMP3, CHMP4A, CHMP4B, CHMP4C and CHMP6. Interacts with VPS4B; the interaction suggests a heteromeric assembly with VPS4B. Interacts with SPAST. Interacts with IST1. Interacts with ZFYVE19/ANCHR; leading to retain it at midbody (By similarity).</text>
</comment>
<comment type="subcellular location">
    <subcellularLocation>
        <location evidence="7">Late endosome membrane</location>
        <topology evidence="9">Peripheral membrane protein</topology>
    </subcellularLocation>
    <subcellularLocation>
        <location evidence="4">Midbody</location>
    </subcellularLocation>
    <subcellularLocation>
        <location evidence="4">Cytoplasm</location>
        <location evidence="4">Cytoskeleton</location>
        <location evidence="4">Spindle</location>
    </subcellularLocation>
    <text evidence="4">Membrane-associated in the prevacuolar endosomal compartment. Localizes to the midbody of dividing cells, interaction with ZFYVE19/ANCHR mediates retention at midbody. Localized in two distinct rings on either side of the Flemming body (By similarity).</text>
</comment>
<comment type="tissue specificity">
    <text evidence="7">Highly expressed in testis and moderately in heart and brain. Not detected in spleen, lung, liver, skeletal muscle or kidney.</text>
</comment>
<comment type="domain">
    <text evidence="2">The MIT domain serves as an adapter for ESCRT-III proteins. It forms an asymmetric three-helix bundle that binds amphipathic MIM (MIT interacting motif) helices along the groove between MIT helices 2 and 3 present in a subset of ESCRT-III proteins thus establishing the canonical MIM-MIT interaction. In an extended conformation along the groove between helices 1 and 3, also binds to a type-2 MIT interacting motif (MIM2) (By similarity).</text>
</comment>
<comment type="similarity">
    <text evidence="5">Belongs to the AAA ATPase family.</text>
</comment>
<sequence length="437" mass="48907">MTTSTLQKAIDLVTKATEEDKAKNYEEALRLYQHAVEYFLHAIKYEAHSDKAKESIRAKCMQYLDRAEKLKDYLRNKEKHGKKPVKENQSEGKGSDSDSEGDNPEKKKLQEQLMGAVVMEKPNIRWNDVAGLEGAKEALKEAVILPIKFPHLFTGKRTPWRGILLFGPPGTGKSYLAKAVATEANNSTFFSVSSSDLMSKWLGESEKLVKNLFELARQHKPSIIFIDEVDSLCGSRNENESEAARRIKTEFLVQMQGVGNNNDGTLVLGATNIPWVLDSAIRRRFEKRIYIPLPEEAARAQMFRLHLGSTPHNLTDANIHELARKTEGYSGADISIIVRDSLMQPVRKVQSATHFKKVCGPSRTNPSVMIDDLLTPCSPGDPGAIEMTWMDVPGDKLLEPVVCMSDMLRSLATTRPTVNADDLLKVKKFSEDFGQES</sequence>
<protein>
    <recommendedName>
        <fullName evidence="8">Vacuolar protein sorting-associated protein 4A</fullName>
        <ecNumber evidence="2">3.6.4.6</ecNumber>
    </recommendedName>
</protein>
<accession>Q8VEJ9</accession>
<accession>Q3TXT2</accession>
<reference evidence="8 11" key="1">
    <citation type="journal article" date="2003" name="Gene">
        <title>Comparative sequence and expression analyses of four mammalian VPS4 genes.</title>
        <authorList>
            <person name="Beyer A."/>
            <person name="Scheuring S."/>
            <person name="Mueller S."/>
            <person name="Mincheva A."/>
            <person name="Lichter P."/>
            <person name="Koehrer K."/>
        </authorList>
    </citation>
    <scope>NUCLEOTIDE SEQUENCE [GENOMIC DNA]</scope>
    <scope>SUBCELLULAR LOCATION</scope>
    <scope>TISSUE SPECIFICITY</scope>
    <scope>MUTAGENESIS OF GLU-228</scope>
    <scope>INTERACTION WITH VPS4B</scope>
    <source>
        <strain evidence="11">129/SvEvTacfBr</strain>
        <tissue evidence="11">Spleen</tissue>
    </source>
</reference>
<reference key="2">
    <citation type="journal article" date="2005" name="Science">
        <title>The transcriptional landscape of the mammalian genome.</title>
        <authorList>
            <person name="Carninci P."/>
            <person name="Kasukawa T."/>
            <person name="Katayama S."/>
            <person name="Gough J."/>
            <person name="Frith M.C."/>
            <person name="Maeda N."/>
            <person name="Oyama R."/>
            <person name="Ravasi T."/>
            <person name="Lenhard B."/>
            <person name="Wells C."/>
            <person name="Kodzius R."/>
            <person name="Shimokawa K."/>
            <person name="Bajic V.B."/>
            <person name="Brenner S.E."/>
            <person name="Batalov S."/>
            <person name="Forrest A.R."/>
            <person name="Zavolan M."/>
            <person name="Davis M.J."/>
            <person name="Wilming L.G."/>
            <person name="Aidinis V."/>
            <person name="Allen J.E."/>
            <person name="Ambesi-Impiombato A."/>
            <person name="Apweiler R."/>
            <person name="Aturaliya R.N."/>
            <person name="Bailey T.L."/>
            <person name="Bansal M."/>
            <person name="Baxter L."/>
            <person name="Beisel K.W."/>
            <person name="Bersano T."/>
            <person name="Bono H."/>
            <person name="Chalk A.M."/>
            <person name="Chiu K.P."/>
            <person name="Choudhary V."/>
            <person name="Christoffels A."/>
            <person name="Clutterbuck D.R."/>
            <person name="Crowe M.L."/>
            <person name="Dalla E."/>
            <person name="Dalrymple B.P."/>
            <person name="de Bono B."/>
            <person name="Della Gatta G."/>
            <person name="di Bernardo D."/>
            <person name="Down T."/>
            <person name="Engstrom P."/>
            <person name="Fagiolini M."/>
            <person name="Faulkner G."/>
            <person name="Fletcher C.F."/>
            <person name="Fukushima T."/>
            <person name="Furuno M."/>
            <person name="Futaki S."/>
            <person name="Gariboldi M."/>
            <person name="Georgii-Hemming P."/>
            <person name="Gingeras T.R."/>
            <person name="Gojobori T."/>
            <person name="Green R.E."/>
            <person name="Gustincich S."/>
            <person name="Harbers M."/>
            <person name="Hayashi Y."/>
            <person name="Hensch T.K."/>
            <person name="Hirokawa N."/>
            <person name="Hill D."/>
            <person name="Huminiecki L."/>
            <person name="Iacono M."/>
            <person name="Ikeo K."/>
            <person name="Iwama A."/>
            <person name="Ishikawa T."/>
            <person name="Jakt M."/>
            <person name="Kanapin A."/>
            <person name="Katoh M."/>
            <person name="Kawasawa Y."/>
            <person name="Kelso J."/>
            <person name="Kitamura H."/>
            <person name="Kitano H."/>
            <person name="Kollias G."/>
            <person name="Krishnan S.P."/>
            <person name="Kruger A."/>
            <person name="Kummerfeld S.K."/>
            <person name="Kurochkin I.V."/>
            <person name="Lareau L.F."/>
            <person name="Lazarevic D."/>
            <person name="Lipovich L."/>
            <person name="Liu J."/>
            <person name="Liuni S."/>
            <person name="McWilliam S."/>
            <person name="Madan Babu M."/>
            <person name="Madera M."/>
            <person name="Marchionni L."/>
            <person name="Matsuda H."/>
            <person name="Matsuzawa S."/>
            <person name="Miki H."/>
            <person name="Mignone F."/>
            <person name="Miyake S."/>
            <person name="Morris K."/>
            <person name="Mottagui-Tabar S."/>
            <person name="Mulder N."/>
            <person name="Nakano N."/>
            <person name="Nakauchi H."/>
            <person name="Ng P."/>
            <person name="Nilsson R."/>
            <person name="Nishiguchi S."/>
            <person name="Nishikawa S."/>
            <person name="Nori F."/>
            <person name="Ohara O."/>
            <person name="Okazaki Y."/>
            <person name="Orlando V."/>
            <person name="Pang K.C."/>
            <person name="Pavan W.J."/>
            <person name="Pavesi G."/>
            <person name="Pesole G."/>
            <person name="Petrovsky N."/>
            <person name="Piazza S."/>
            <person name="Reed J."/>
            <person name="Reid J.F."/>
            <person name="Ring B.Z."/>
            <person name="Ringwald M."/>
            <person name="Rost B."/>
            <person name="Ruan Y."/>
            <person name="Salzberg S.L."/>
            <person name="Sandelin A."/>
            <person name="Schneider C."/>
            <person name="Schoenbach C."/>
            <person name="Sekiguchi K."/>
            <person name="Semple C.A."/>
            <person name="Seno S."/>
            <person name="Sessa L."/>
            <person name="Sheng Y."/>
            <person name="Shibata Y."/>
            <person name="Shimada H."/>
            <person name="Shimada K."/>
            <person name="Silva D."/>
            <person name="Sinclair B."/>
            <person name="Sperling S."/>
            <person name="Stupka E."/>
            <person name="Sugiura K."/>
            <person name="Sultana R."/>
            <person name="Takenaka Y."/>
            <person name="Taki K."/>
            <person name="Tammoja K."/>
            <person name="Tan S.L."/>
            <person name="Tang S."/>
            <person name="Taylor M.S."/>
            <person name="Tegner J."/>
            <person name="Teichmann S.A."/>
            <person name="Ueda H.R."/>
            <person name="van Nimwegen E."/>
            <person name="Verardo R."/>
            <person name="Wei C.L."/>
            <person name="Yagi K."/>
            <person name="Yamanishi H."/>
            <person name="Zabarovsky E."/>
            <person name="Zhu S."/>
            <person name="Zimmer A."/>
            <person name="Hide W."/>
            <person name="Bult C."/>
            <person name="Grimmond S.M."/>
            <person name="Teasdale R.D."/>
            <person name="Liu E.T."/>
            <person name="Brusic V."/>
            <person name="Quackenbush J."/>
            <person name="Wahlestedt C."/>
            <person name="Mattick J.S."/>
            <person name="Hume D.A."/>
            <person name="Kai C."/>
            <person name="Sasaki D."/>
            <person name="Tomaru Y."/>
            <person name="Fukuda S."/>
            <person name="Kanamori-Katayama M."/>
            <person name="Suzuki M."/>
            <person name="Aoki J."/>
            <person name="Arakawa T."/>
            <person name="Iida J."/>
            <person name="Imamura K."/>
            <person name="Itoh M."/>
            <person name="Kato T."/>
            <person name="Kawaji H."/>
            <person name="Kawagashira N."/>
            <person name="Kawashima T."/>
            <person name="Kojima M."/>
            <person name="Kondo S."/>
            <person name="Konno H."/>
            <person name="Nakano K."/>
            <person name="Ninomiya N."/>
            <person name="Nishio T."/>
            <person name="Okada M."/>
            <person name="Plessy C."/>
            <person name="Shibata K."/>
            <person name="Shiraki T."/>
            <person name="Suzuki S."/>
            <person name="Tagami M."/>
            <person name="Waki K."/>
            <person name="Watahiki A."/>
            <person name="Okamura-Oho Y."/>
            <person name="Suzuki H."/>
            <person name="Kawai J."/>
            <person name="Hayashizaki Y."/>
        </authorList>
    </citation>
    <scope>NUCLEOTIDE SEQUENCE [LARGE SCALE MRNA]</scope>
    <source>
        <strain>C57BL/6J</strain>
        <tissue>Head</tissue>
    </source>
</reference>
<reference evidence="10" key="3">
    <citation type="journal article" date="2004" name="Genome Res.">
        <title>The status, quality, and expansion of the NIH full-length cDNA project: the Mammalian Gene Collection (MGC).</title>
        <authorList>
            <consortium name="The MGC Project Team"/>
        </authorList>
    </citation>
    <scope>NUCLEOTIDE SEQUENCE [LARGE SCALE MRNA]</scope>
    <source>
        <strain evidence="10">FVB/N</strain>
        <tissue evidence="10">Mammary gland</tissue>
    </source>
</reference>
<reference key="4">
    <citation type="journal article" date="2010" name="Cell">
        <title>A tissue-specific atlas of mouse protein phosphorylation and expression.</title>
        <authorList>
            <person name="Huttlin E.L."/>
            <person name="Jedrychowski M.P."/>
            <person name="Elias J.E."/>
            <person name="Goswami T."/>
            <person name="Rad R."/>
            <person name="Beausoleil S.A."/>
            <person name="Villen J."/>
            <person name="Haas W."/>
            <person name="Sowa M.E."/>
            <person name="Gygi S.P."/>
        </authorList>
    </citation>
    <scope>IDENTIFICATION BY MASS SPECTROMETRY [LARGE SCALE ANALYSIS]</scope>
    <source>
        <tissue>Brain</tissue>
        <tissue>Heart</tissue>
        <tissue>Kidney</tissue>
        <tissue>Lung</tissue>
        <tissue>Spleen</tissue>
        <tissue>Testis</tissue>
    </source>
</reference>
<name>VPS4A_MOUSE</name>
<proteinExistence type="evidence at protein level"/>
<evidence type="ECO:0000250" key="1"/>
<evidence type="ECO:0000250" key="2">
    <source>
        <dbReference type="UniProtKB" id="O75351"/>
    </source>
</evidence>
<evidence type="ECO:0000250" key="3">
    <source>
        <dbReference type="UniProtKB" id="Q793F9"/>
    </source>
</evidence>
<evidence type="ECO:0000250" key="4">
    <source>
        <dbReference type="UniProtKB" id="Q9UN37"/>
    </source>
</evidence>
<evidence type="ECO:0000255" key="5"/>
<evidence type="ECO:0000256" key="6">
    <source>
        <dbReference type="SAM" id="MobiDB-lite"/>
    </source>
</evidence>
<evidence type="ECO:0000269" key="7">
    <source>
    </source>
</evidence>
<evidence type="ECO:0000305" key="8"/>
<evidence type="ECO:0000305" key="9">
    <source>
    </source>
</evidence>
<evidence type="ECO:0000312" key="10">
    <source>
        <dbReference type="EMBL" id="AAH18368.1"/>
    </source>
</evidence>
<evidence type="ECO:0000312" key="11">
    <source>
        <dbReference type="EMBL" id="AAM94861.1"/>
    </source>
</evidence>
<evidence type="ECO:0000312" key="12">
    <source>
        <dbReference type="MGI" id="MGI:1890520"/>
    </source>
</evidence>
<keyword id="KW-0007">Acetylation</keyword>
<keyword id="KW-0067">ATP-binding</keyword>
<keyword id="KW-0131">Cell cycle</keyword>
<keyword id="KW-0132">Cell division</keyword>
<keyword id="KW-0175">Coiled coil</keyword>
<keyword id="KW-0963">Cytoplasm</keyword>
<keyword id="KW-0206">Cytoskeleton</keyword>
<keyword id="KW-0967">Endosome</keyword>
<keyword id="KW-0378">Hydrolase</keyword>
<keyword id="KW-0472">Membrane</keyword>
<keyword id="KW-0547">Nucleotide-binding</keyword>
<keyword id="KW-0597">Phosphoprotein</keyword>
<keyword id="KW-0653">Protein transport</keyword>
<keyword id="KW-1185">Reference proteome</keyword>
<keyword id="KW-0813">Transport</keyword>
<feature type="chain" id="PRO_0000084766" description="Vacuolar protein sorting-associated protein 4A">
    <location>
        <begin position="1"/>
        <end position="437"/>
    </location>
</feature>
<feature type="domain" description="MIT">
    <location>
        <begin position="2"/>
        <end position="80"/>
    </location>
</feature>
<feature type="region of interest" description="Disordered" evidence="6">
    <location>
        <begin position="75"/>
        <end position="106"/>
    </location>
</feature>
<feature type="coiled-coil region" evidence="5">
    <location>
        <begin position="15"/>
        <end position="37"/>
    </location>
</feature>
<feature type="compositionally biased region" description="Basic and acidic residues" evidence="6">
    <location>
        <begin position="84"/>
        <end position="96"/>
    </location>
</feature>
<feature type="binding site" evidence="8">
    <location>
        <begin position="167"/>
        <end position="174"/>
    </location>
    <ligand>
        <name>ATP</name>
        <dbReference type="ChEBI" id="CHEBI:30616"/>
    </ligand>
</feature>
<feature type="modified residue" description="N6-acetyllysine" evidence="4">
    <location>
        <position position="8"/>
    </location>
</feature>
<feature type="modified residue" description="Phosphoserine" evidence="3">
    <location>
        <position position="95"/>
    </location>
</feature>
<feature type="modified residue" description="Phosphoserine" evidence="3">
    <location>
        <position position="97"/>
    </location>
</feature>
<feature type="mutagenesis site" description="Perinuclear localization." evidence="7">
    <original>E</original>
    <variation>Q</variation>
    <location>
        <position position="228"/>
    </location>
</feature>
<dbReference type="EC" id="3.6.4.6" evidence="2"/>
<dbReference type="EMBL" id="AF530161">
    <property type="protein sequence ID" value="AAM94861.1"/>
    <property type="molecule type" value="Genomic_DNA"/>
</dbReference>
<dbReference type="EMBL" id="AK047821">
    <property type="protein sequence ID" value="BAC33165.1"/>
    <property type="molecule type" value="mRNA"/>
</dbReference>
<dbReference type="EMBL" id="AK159117">
    <property type="protein sequence ID" value="BAE34833.1"/>
    <property type="molecule type" value="mRNA"/>
</dbReference>
<dbReference type="EMBL" id="BC018368">
    <property type="protein sequence ID" value="AAH18368.1"/>
    <property type="molecule type" value="mRNA"/>
</dbReference>
<dbReference type="CCDS" id="CCDS40463.1"/>
<dbReference type="RefSeq" id="NP_569053.1">
    <property type="nucleotide sequence ID" value="NM_126165.2"/>
</dbReference>
<dbReference type="BMRB" id="Q8VEJ9"/>
<dbReference type="SMR" id="Q8VEJ9"/>
<dbReference type="BioGRID" id="227970">
    <property type="interactions" value="3"/>
</dbReference>
<dbReference type="ComplexPortal" id="CPX-340">
    <property type="entry name" value="VPS4A/B complex"/>
</dbReference>
<dbReference type="FunCoup" id="Q8VEJ9">
    <property type="interactions" value="3452"/>
</dbReference>
<dbReference type="IntAct" id="Q8VEJ9">
    <property type="interactions" value="1"/>
</dbReference>
<dbReference type="MINT" id="Q8VEJ9"/>
<dbReference type="STRING" id="10090.ENSMUSP00000034388"/>
<dbReference type="GlyGen" id="Q8VEJ9">
    <property type="glycosylation" value="3 sites, 3 N-linked glycans (3 sites)"/>
</dbReference>
<dbReference type="iPTMnet" id="Q8VEJ9"/>
<dbReference type="PhosphoSitePlus" id="Q8VEJ9"/>
<dbReference type="jPOST" id="Q8VEJ9"/>
<dbReference type="PaxDb" id="10090-ENSMUSP00000034388"/>
<dbReference type="ProteomicsDB" id="297585"/>
<dbReference type="Pumba" id="Q8VEJ9"/>
<dbReference type="DNASU" id="116733"/>
<dbReference type="Ensembl" id="ENSMUST00000034388.10">
    <property type="protein sequence ID" value="ENSMUSP00000034388.10"/>
    <property type="gene ID" value="ENSMUSG00000031913.10"/>
</dbReference>
<dbReference type="GeneID" id="116733"/>
<dbReference type="KEGG" id="mmu:116733"/>
<dbReference type="UCSC" id="uc009ngv.1">
    <property type="organism name" value="mouse"/>
</dbReference>
<dbReference type="AGR" id="MGI:1890520"/>
<dbReference type="CTD" id="27183"/>
<dbReference type="MGI" id="MGI:1890520">
    <property type="gene designation" value="Vps4a"/>
</dbReference>
<dbReference type="VEuPathDB" id="HostDB:ENSMUSG00000031913"/>
<dbReference type="eggNOG" id="KOG0739">
    <property type="taxonomic scope" value="Eukaryota"/>
</dbReference>
<dbReference type="GeneTree" id="ENSGT00940000157319"/>
<dbReference type="HOGENOM" id="CLU_000688_21_2_1"/>
<dbReference type="InParanoid" id="Q8VEJ9"/>
<dbReference type="OMA" id="IEWTNEF"/>
<dbReference type="OrthoDB" id="29072at2759"/>
<dbReference type="PhylomeDB" id="Q8VEJ9"/>
<dbReference type="TreeFam" id="TF105012"/>
<dbReference type="Reactome" id="R-MMU-917729">
    <property type="pathway name" value="Endosomal Sorting Complex Required For Transport (ESCRT)"/>
</dbReference>
<dbReference type="Reactome" id="R-MMU-9668328">
    <property type="pathway name" value="Sealing of the nuclear envelope (NE) by ESCRT-III"/>
</dbReference>
<dbReference type="BioGRID-ORCS" id="116733">
    <property type="hits" value="1 hit in 79 CRISPR screens"/>
</dbReference>
<dbReference type="ChiTaRS" id="Vps4a">
    <property type="organism name" value="mouse"/>
</dbReference>
<dbReference type="PRO" id="PR:Q8VEJ9"/>
<dbReference type="Proteomes" id="UP000000589">
    <property type="component" value="Chromosome 8"/>
</dbReference>
<dbReference type="RNAct" id="Q8VEJ9">
    <property type="molecule type" value="protein"/>
</dbReference>
<dbReference type="Bgee" id="ENSMUSG00000031913">
    <property type="expression patterns" value="Expressed in spermatid and 258 other cell types or tissues"/>
</dbReference>
<dbReference type="GO" id="GO:1904949">
    <property type="term" value="C:ATPase complex"/>
    <property type="evidence" value="ECO:0000303"/>
    <property type="project" value="ComplexPortal"/>
</dbReference>
<dbReference type="GO" id="GO:0005813">
    <property type="term" value="C:centrosome"/>
    <property type="evidence" value="ECO:0007669"/>
    <property type="project" value="Ensembl"/>
</dbReference>
<dbReference type="GO" id="GO:0005737">
    <property type="term" value="C:cytoplasm"/>
    <property type="evidence" value="ECO:0000314"/>
    <property type="project" value="UniProtKB"/>
</dbReference>
<dbReference type="GO" id="GO:0005829">
    <property type="term" value="C:cytosol"/>
    <property type="evidence" value="ECO:0007669"/>
    <property type="project" value="Ensembl"/>
</dbReference>
<dbReference type="GO" id="GO:0005769">
    <property type="term" value="C:early endosome"/>
    <property type="evidence" value="ECO:0007669"/>
    <property type="project" value="Ensembl"/>
</dbReference>
<dbReference type="GO" id="GO:0090543">
    <property type="term" value="C:Flemming body"/>
    <property type="evidence" value="ECO:0007669"/>
    <property type="project" value="Ensembl"/>
</dbReference>
<dbReference type="GO" id="GO:0031902">
    <property type="term" value="C:late endosome membrane"/>
    <property type="evidence" value="ECO:0007669"/>
    <property type="project" value="UniProtKB-SubCell"/>
</dbReference>
<dbReference type="GO" id="GO:0005764">
    <property type="term" value="C:lysosome"/>
    <property type="evidence" value="ECO:0007669"/>
    <property type="project" value="Ensembl"/>
</dbReference>
<dbReference type="GO" id="GO:0030496">
    <property type="term" value="C:midbody"/>
    <property type="evidence" value="ECO:0000250"/>
    <property type="project" value="UniProtKB"/>
</dbReference>
<dbReference type="GO" id="GO:0005643">
    <property type="term" value="C:nuclear pore"/>
    <property type="evidence" value="ECO:0000303"/>
    <property type="project" value="ComplexPortal"/>
</dbReference>
<dbReference type="GO" id="GO:0048471">
    <property type="term" value="C:perinuclear region of cytoplasm"/>
    <property type="evidence" value="ECO:0000314"/>
    <property type="project" value="UniProtKB"/>
</dbReference>
<dbReference type="GO" id="GO:0005886">
    <property type="term" value="C:plasma membrane"/>
    <property type="evidence" value="ECO:0000303"/>
    <property type="project" value="ComplexPortal"/>
</dbReference>
<dbReference type="GO" id="GO:0000922">
    <property type="term" value="C:spindle pole"/>
    <property type="evidence" value="ECO:0007669"/>
    <property type="project" value="Ensembl"/>
</dbReference>
<dbReference type="GO" id="GO:0005774">
    <property type="term" value="C:vacuolar membrane"/>
    <property type="evidence" value="ECO:0007669"/>
    <property type="project" value="Ensembl"/>
</dbReference>
<dbReference type="GO" id="GO:0005524">
    <property type="term" value="F:ATP binding"/>
    <property type="evidence" value="ECO:0007669"/>
    <property type="project" value="UniProtKB-KW"/>
</dbReference>
<dbReference type="GO" id="GO:0016887">
    <property type="term" value="F:ATP hydrolysis activity"/>
    <property type="evidence" value="ECO:0007669"/>
    <property type="project" value="Ensembl"/>
</dbReference>
<dbReference type="GO" id="GO:0044877">
    <property type="term" value="F:protein-containing complex binding"/>
    <property type="evidence" value="ECO:0007669"/>
    <property type="project" value="Ensembl"/>
</dbReference>
<dbReference type="GO" id="GO:0097352">
    <property type="term" value="P:autophagosome maturation"/>
    <property type="evidence" value="ECO:0000303"/>
    <property type="project" value="ComplexPortal"/>
</dbReference>
<dbReference type="GO" id="GO:0006914">
    <property type="term" value="P:autophagy"/>
    <property type="evidence" value="ECO:0000303"/>
    <property type="project" value="ComplexPortal"/>
</dbReference>
<dbReference type="GO" id="GO:0034058">
    <property type="term" value="P:endosomal vesicle fusion"/>
    <property type="evidence" value="ECO:0007669"/>
    <property type="project" value="Ensembl"/>
</dbReference>
<dbReference type="GO" id="GO:0007032">
    <property type="term" value="P:endosome organization"/>
    <property type="evidence" value="ECO:0000316"/>
    <property type="project" value="MGI"/>
</dbReference>
<dbReference type="GO" id="GO:0032367">
    <property type="term" value="P:intracellular cholesterol transport"/>
    <property type="evidence" value="ECO:0007669"/>
    <property type="project" value="Ensembl"/>
</dbReference>
<dbReference type="GO" id="GO:0061738">
    <property type="term" value="P:late endosomal microautophagy"/>
    <property type="evidence" value="ECO:0000315"/>
    <property type="project" value="ParkinsonsUK-UCL"/>
</dbReference>
<dbReference type="GO" id="GO:0061764">
    <property type="term" value="P:late endosome to lysosome transport via multivesicular body sorting pathway"/>
    <property type="evidence" value="ECO:0000303"/>
    <property type="project" value="ComplexPortal"/>
</dbReference>
<dbReference type="GO" id="GO:0090148">
    <property type="term" value="P:membrane fission"/>
    <property type="evidence" value="ECO:0000303"/>
    <property type="project" value="ComplexPortal"/>
</dbReference>
<dbReference type="GO" id="GO:0061952">
    <property type="term" value="P:midbody abscission"/>
    <property type="evidence" value="ECO:0000250"/>
    <property type="project" value="UniProtKB"/>
</dbReference>
<dbReference type="GO" id="GO:0044878">
    <property type="term" value="P:mitotic cytokinesis checkpoint signaling"/>
    <property type="evidence" value="ECO:0000250"/>
    <property type="project" value="UniProtKB"/>
</dbReference>
<dbReference type="GO" id="GO:0007080">
    <property type="term" value="P:mitotic metaphase chromosome alignment"/>
    <property type="evidence" value="ECO:0007669"/>
    <property type="project" value="Ensembl"/>
</dbReference>
<dbReference type="GO" id="GO:0036258">
    <property type="term" value="P:multivesicular body assembly"/>
    <property type="evidence" value="ECO:0000315"/>
    <property type="project" value="ParkinsonsUK-UCL"/>
</dbReference>
<dbReference type="GO" id="GO:0071985">
    <property type="term" value="P:multivesicular body sorting pathway"/>
    <property type="evidence" value="ECO:0000303"/>
    <property type="project" value="ComplexPortal"/>
</dbReference>
<dbReference type="GO" id="GO:0032466">
    <property type="term" value="P:negative regulation of cytokinesis"/>
    <property type="evidence" value="ECO:0000250"/>
    <property type="project" value="UniProtKB"/>
</dbReference>
<dbReference type="GO" id="GO:0031468">
    <property type="term" value="P:nuclear membrane reassembly"/>
    <property type="evidence" value="ECO:0000303"/>
    <property type="project" value="ComplexPortal"/>
</dbReference>
<dbReference type="GO" id="GO:0006997">
    <property type="term" value="P:nucleus organization"/>
    <property type="evidence" value="ECO:0000303"/>
    <property type="project" value="ComplexPortal"/>
</dbReference>
<dbReference type="GO" id="GO:0001778">
    <property type="term" value="P:plasma membrane repair"/>
    <property type="evidence" value="ECO:0000303"/>
    <property type="project" value="ComplexPortal"/>
</dbReference>
<dbReference type="GO" id="GO:1903543">
    <property type="term" value="P:positive regulation of exosomal secretion"/>
    <property type="evidence" value="ECO:0007669"/>
    <property type="project" value="Ensembl"/>
</dbReference>
<dbReference type="GO" id="GO:1903774">
    <property type="term" value="P:positive regulation of viral budding via host ESCRT complex"/>
    <property type="evidence" value="ECO:0007669"/>
    <property type="project" value="Ensembl"/>
</dbReference>
<dbReference type="GO" id="GO:0006622">
    <property type="term" value="P:protein targeting to lysosome"/>
    <property type="evidence" value="ECO:0007669"/>
    <property type="project" value="Ensembl"/>
</dbReference>
<dbReference type="GO" id="GO:1903076">
    <property type="term" value="P:regulation of protein localization to plasma membrane"/>
    <property type="evidence" value="ECO:0007669"/>
    <property type="project" value="Ensembl"/>
</dbReference>
<dbReference type="GO" id="GO:0043162">
    <property type="term" value="P:ubiquitin-dependent protein catabolic process via the multivesicular body sorting pathway"/>
    <property type="evidence" value="ECO:0007669"/>
    <property type="project" value="Ensembl"/>
</dbReference>
<dbReference type="GO" id="GO:0090611">
    <property type="term" value="P:ubiquitin-independent protein catabolic process via the multivesicular body sorting pathway"/>
    <property type="evidence" value="ECO:0007669"/>
    <property type="project" value="Ensembl"/>
</dbReference>
<dbReference type="GO" id="GO:0006900">
    <property type="term" value="P:vesicle budding from membrane"/>
    <property type="evidence" value="ECO:0007669"/>
    <property type="project" value="Ensembl"/>
</dbReference>
<dbReference type="GO" id="GO:0072319">
    <property type="term" value="P:vesicle uncoating"/>
    <property type="evidence" value="ECO:0007669"/>
    <property type="project" value="Ensembl"/>
</dbReference>
<dbReference type="GO" id="GO:0016192">
    <property type="term" value="P:vesicle-mediated transport"/>
    <property type="evidence" value="ECO:0000250"/>
    <property type="project" value="UniProtKB"/>
</dbReference>
<dbReference type="GO" id="GO:0046761">
    <property type="term" value="P:viral budding from plasma membrane"/>
    <property type="evidence" value="ECO:0000315"/>
    <property type="project" value="UniProtKB"/>
</dbReference>
<dbReference type="GO" id="GO:0039702">
    <property type="term" value="P:viral budding via host ESCRT complex"/>
    <property type="evidence" value="ECO:0007669"/>
    <property type="project" value="Ensembl"/>
</dbReference>
<dbReference type="CDD" id="cd02678">
    <property type="entry name" value="MIT_VPS4"/>
    <property type="match status" value="1"/>
</dbReference>
<dbReference type="CDD" id="cd19521">
    <property type="entry name" value="RecA-like_VPS4"/>
    <property type="match status" value="1"/>
</dbReference>
<dbReference type="FunFam" id="3.40.50.300:FF:000043">
    <property type="entry name" value="Vacuolar protein sorting-associated protein 4"/>
    <property type="match status" value="1"/>
</dbReference>
<dbReference type="FunFam" id="1.20.58.80:FF:000002">
    <property type="entry name" value="Vacuolar protein sorting-associated protein 4A"/>
    <property type="match status" value="1"/>
</dbReference>
<dbReference type="FunFam" id="1.10.8.60:FF:000015">
    <property type="entry name" value="vacuolar protein sorting-associated protein 4A"/>
    <property type="match status" value="1"/>
</dbReference>
<dbReference type="Gene3D" id="1.10.8.60">
    <property type="match status" value="1"/>
</dbReference>
<dbReference type="Gene3D" id="3.40.50.300">
    <property type="entry name" value="P-loop containing nucleotide triphosphate hydrolases"/>
    <property type="match status" value="1"/>
</dbReference>
<dbReference type="Gene3D" id="1.20.58.80">
    <property type="entry name" value="Phosphotransferase system, lactose/cellobiose-type IIA subunit"/>
    <property type="match status" value="1"/>
</dbReference>
<dbReference type="InterPro" id="IPR003593">
    <property type="entry name" value="AAA+_ATPase"/>
</dbReference>
<dbReference type="InterPro" id="IPR041569">
    <property type="entry name" value="AAA_lid_3"/>
</dbReference>
<dbReference type="InterPro" id="IPR003959">
    <property type="entry name" value="ATPase_AAA_core"/>
</dbReference>
<dbReference type="InterPro" id="IPR003960">
    <property type="entry name" value="ATPase_AAA_CS"/>
</dbReference>
<dbReference type="InterPro" id="IPR007330">
    <property type="entry name" value="MIT_dom"/>
</dbReference>
<dbReference type="InterPro" id="IPR036181">
    <property type="entry name" value="MIT_dom_sf"/>
</dbReference>
<dbReference type="InterPro" id="IPR050304">
    <property type="entry name" value="MT-severing_AAA_ATPase"/>
</dbReference>
<dbReference type="InterPro" id="IPR027417">
    <property type="entry name" value="P-loop_NTPase"/>
</dbReference>
<dbReference type="InterPro" id="IPR015415">
    <property type="entry name" value="Spast_Vps4_C"/>
</dbReference>
<dbReference type="InterPro" id="IPR045253">
    <property type="entry name" value="VPS4_MIT"/>
</dbReference>
<dbReference type="PANTHER" id="PTHR23074">
    <property type="entry name" value="AAA DOMAIN-CONTAINING"/>
    <property type="match status" value="1"/>
</dbReference>
<dbReference type="PANTHER" id="PTHR23074:SF83">
    <property type="entry name" value="VACUOLAR PROTEIN SORTING-ASSOCIATED PROTEIN 4A"/>
    <property type="match status" value="1"/>
</dbReference>
<dbReference type="Pfam" id="PF00004">
    <property type="entry name" value="AAA"/>
    <property type="match status" value="1"/>
</dbReference>
<dbReference type="Pfam" id="PF17862">
    <property type="entry name" value="AAA_lid_3"/>
    <property type="match status" value="1"/>
</dbReference>
<dbReference type="Pfam" id="PF04212">
    <property type="entry name" value="MIT"/>
    <property type="match status" value="1"/>
</dbReference>
<dbReference type="Pfam" id="PF09336">
    <property type="entry name" value="Vps4_C"/>
    <property type="match status" value="1"/>
</dbReference>
<dbReference type="SMART" id="SM00382">
    <property type="entry name" value="AAA"/>
    <property type="match status" value="1"/>
</dbReference>
<dbReference type="SMART" id="SM00745">
    <property type="entry name" value="MIT"/>
    <property type="match status" value="1"/>
</dbReference>
<dbReference type="SUPFAM" id="SSF116846">
    <property type="entry name" value="MIT domain"/>
    <property type="match status" value="1"/>
</dbReference>
<dbReference type="SUPFAM" id="SSF52540">
    <property type="entry name" value="P-loop containing nucleoside triphosphate hydrolases"/>
    <property type="match status" value="1"/>
</dbReference>
<dbReference type="PROSITE" id="PS00674">
    <property type="entry name" value="AAA"/>
    <property type="match status" value="1"/>
</dbReference>
<organism>
    <name type="scientific">Mus musculus</name>
    <name type="common">Mouse</name>
    <dbReference type="NCBI Taxonomy" id="10090"/>
    <lineage>
        <taxon>Eukaryota</taxon>
        <taxon>Metazoa</taxon>
        <taxon>Chordata</taxon>
        <taxon>Craniata</taxon>
        <taxon>Vertebrata</taxon>
        <taxon>Euteleostomi</taxon>
        <taxon>Mammalia</taxon>
        <taxon>Eutheria</taxon>
        <taxon>Euarchontoglires</taxon>
        <taxon>Glires</taxon>
        <taxon>Rodentia</taxon>
        <taxon>Myomorpha</taxon>
        <taxon>Muroidea</taxon>
        <taxon>Muridae</taxon>
        <taxon>Murinae</taxon>
        <taxon>Mus</taxon>
        <taxon>Mus</taxon>
    </lineage>
</organism>